<protein>
    <recommendedName>
        <fullName evidence="1">Leucine--tRNA ligase</fullName>
        <ecNumber evidence="1">6.1.1.4</ecNumber>
    </recommendedName>
    <alternativeName>
        <fullName evidence="1">Leucyl-tRNA synthetase</fullName>
        <shortName evidence="1">LeuRS</shortName>
    </alternativeName>
</protein>
<name>SYL_PSEA8</name>
<reference key="1">
    <citation type="journal article" date="2009" name="Genome Res.">
        <title>Newly introduced genomic prophage islands are critical determinants of in vivo competitiveness in the Liverpool epidemic strain of Pseudomonas aeruginosa.</title>
        <authorList>
            <person name="Winstanley C."/>
            <person name="Langille M.G.I."/>
            <person name="Fothergill J.L."/>
            <person name="Kukavica-Ibrulj I."/>
            <person name="Paradis-Bleau C."/>
            <person name="Sanschagrin F."/>
            <person name="Thomson N.R."/>
            <person name="Winsor G.L."/>
            <person name="Quail M.A."/>
            <person name="Lennard N."/>
            <person name="Bignell A."/>
            <person name="Clarke L."/>
            <person name="Seeger K."/>
            <person name="Saunders D."/>
            <person name="Harris D."/>
            <person name="Parkhill J."/>
            <person name="Hancock R.E.W."/>
            <person name="Brinkman F.S.L."/>
            <person name="Levesque R.C."/>
        </authorList>
    </citation>
    <scope>NUCLEOTIDE SEQUENCE [LARGE SCALE GENOMIC DNA]</scope>
    <source>
        <strain>LESB58</strain>
    </source>
</reference>
<accession>B7V9C9</accession>
<organism>
    <name type="scientific">Pseudomonas aeruginosa (strain LESB58)</name>
    <dbReference type="NCBI Taxonomy" id="557722"/>
    <lineage>
        <taxon>Bacteria</taxon>
        <taxon>Pseudomonadati</taxon>
        <taxon>Pseudomonadota</taxon>
        <taxon>Gammaproteobacteria</taxon>
        <taxon>Pseudomonadales</taxon>
        <taxon>Pseudomonadaceae</taxon>
        <taxon>Pseudomonas</taxon>
    </lineage>
</organism>
<proteinExistence type="inferred from homology"/>
<comment type="catalytic activity">
    <reaction evidence="1">
        <text>tRNA(Leu) + L-leucine + ATP = L-leucyl-tRNA(Leu) + AMP + diphosphate</text>
        <dbReference type="Rhea" id="RHEA:11688"/>
        <dbReference type="Rhea" id="RHEA-COMP:9613"/>
        <dbReference type="Rhea" id="RHEA-COMP:9622"/>
        <dbReference type="ChEBI" id="CHEBI:30616"/>
        <dbReference type="ChEBI" id="CHEBI:33019"/>
        <dbReference type="ChEBI" id="CHEBI:57427"/>
        <dbReference type="ChEBI" id="CHEBI:78442"/>
        <dbReference type="ChEBI" id="CHEBI:78494"/>
        <dbReference type="ChEBI" id="CHEBI:456215"/>
        <dbReference type="EC" id="6.1.1.4"/>
    </reaction>
</comment>
<comment type="subcellular location">
    <subcellularLocation>
        <location evidence="1">Cytoplasm</location>
    </subcellularLocation>
</comment>
<comment type="similarity">
    <text evidence="1">Belongs to the class-I aminoacyl-tRNA synthetase family.</text>
</comment>
<keyword id="KW-0030">Aminoacyl-tRNA synthetase</keyword>
<keyword id="KW-0067">ATP-binding</keyword>
<keyword id="KW-0963">Cytoplasm</keyword>
<keyword id="KW-0436">Ligase</keyword>
<keyword id="KW-0547">Nucleotide-binding</keyword>
<keyword id="KW-0648">Protein biosynthesis</keyword>
<gene>
    <name evidence="1" type="primary">leuS</name>
    <name type="ordered locus">PLES_09881</name>
</gene>
<feature type="chain" id="PRO_1000199219" description="Leucine--tRNA ligase">
    <location>
        <begin position="1"/>
        <end position="873"/>
    </location>
</feature>
<feature type="region of interest" description="Disordered" evidence="2">
    <location>
        <begin position="624"/>
        <end position="643"/>
    </location>
</feature>
<feature type="short sequence motif" description="'HIGH' region">
    <location>
        <begin position="42"/>
        <end position="52"/>
    </location>
</feature>
<feature type="short sequence motif" description="'KMSKS' region">
    <location>
        <begin position="632"/>
        <end position="636"/>
    </location>
</feature>
<feature type="binding site" evidence="1">
    <location>
        <position position="635"/>
    </location>
    <ligand>
        <name>ATP</name>
        <dbReference type="ChEBI" id="CHEBI:30616"/>
    </ligand>
</feature>
<sequence length="873" mass="97678">MHEQYQPLEIETQAQNYWKEHQSFLVRELPDKEKFYCLSMFPYPSGKLHMGHVRNYTIGDVISRYHRMQGRNVLQPMGWDAFGMPAENAAMKNNVAPAAWTYDNIAYMKSQLDSLGLAIDWSREVTTCKPDYYRWEQWLFTRLFEKGVIYRKNGTVNWDPVDQTVLANEQVIDGRGWRSGALIEKREIPMYYFKITAYAEELLESLDNLPGWPEQVKTMQRNWIGKSRGMEIGFPYDQASIGHAGQLKVFTTRPDTLMGATYVAVAAEHPLATQAAQNDPQLQAFIDECKRGGVAEADIATQEKKGMATSLFVEHPLTGDKLPVWVANYVLMNYGEGAVMAVPGHDERDFEFANKYGLPIRQVIAKVEGDNDFESSVWKEWYGAKDESVLTVNSGKYDNLGYQAAFDAIGADLEAKGLGQARTQFRLRDWGISRQRYWGCPIPIIHCEACGDVPVPADQLPVVLPEDVVPDGSGSPLAKMPEFYECNCPKCGQPAKRETDTMDTFVESSWYFARYACPQFEGGMLDRKAADYWLPVDQYIGGIEHAILHLLYARFFHKLMRDEGLVGSDEPFKNLLTQGMVVADTYYRTTANGGKDWFNPADVEVERDAKAKVVGARLKSDGQPVEIGGTEKMSKSKNNGVDPQSMIDQYGADTCRLFMMFASPPDMSLEWSDAGVEGANRFLRRVWRLAHAHVSAGLPGALDVATLSDAQKQVRRAIHLAIRQASQDVGQHHKFNTAIAAVMTLMNVLEKAPNQDAQDRALIQEGLETVVLLLAPITPHICHVLWGQLGHAEAVIDARWPSVDESALVQDTLQLVVQVNGKLRGHIDVAASASREDVEAAARANENVLRFTEGLSIRKVIVVPGKLVNIVAN</sequence>
<evidence type="ECO:0000255" key="1">
    <source>
        <dbReference type="HAMAP-Rule" id="MF_00049"/>
    </source>
</evidence>
<evidence type="ECO:0000256" key="2">
    <source>
        <dbReference type="SAM" id="MobiDB-lite"/>
    </source>
</evidence>
<dbReference type="EC" id="6.1.1.4" evidence="1"/>
<dbReference type="EMBL" id="FM209186">
    <property type="protein sequence ID" value="CAW25715.1"/>
    <property type="molecule type" value="Genomic_DNA"/>
</dbReference>
<dbReference type="RefSeq" id="WP_012613615.1">
    <property type="nucleotide sequence ID" value="NC_011770.1"/>
</dbReference>
<dbReference type="SMR" id="B7V9C9"/>
<dbReference type="KEGG" id="pag:PLES_09881"/>
<dbReference type="HOGENOM" id="CLU_004427_0_0_6"/>
<dbReference type="GO" id="GO:0005829">
    <property type="term" value="C:cytosol"/>
    <property type="evidence" value="ECO:0007669"/>
    <property type="project" value="TreeGrafter"/>
</dbReference>
<dbReference type="GO" id="GO:0002161">
    <property type="term" value="F:aminoacyl-tRNA deacylase activity"/>
    <property type="evidence" value="ECO:0007669"/>
    <property type="project" value="InterPro"/>
</dbReference>
<dbReference type="GO" id="GO:0005524">
    <property type="term" value="F:ATP binding"/>
    <property type="evidence" value="ECO:0007669"/>
    <property type="project" value="UniProtKB-UniRule"/>
</dbReference>
<dbReference type="GO" id="GO:0004823">
    <property type="term" value="F:leucine-tRNA ligase activity"/>
    <property type="evidence" value="ECO:0007669"/>
    <property type="project" value="UniProtKB-UniRule"/>
</dbReference>
<dbReference type="GO" id="GO:0006429">
    <property type="term" value="P:leucyl-tRNA aminoacylation"/>
    <property type="evidence" value="ECO:0007669"/>
    <property type="project" value="UniProtKB-UniRule"/>
</dbReference>
<dbReference type="CDD" id="cd07958">
    <property type="entry name" value="Anticodon_Ia_Leu_BEm"/>
    <property type="match status" value="1"/>
</dbReference>
<dbReference type="CDD" id="cd00812">
    <property type="entry name" value="LeuRS_core"/>
    <property type="match status" value="1"/>
</dbReference>
<dbReference type="FunFam" id="1.10.730.10:FF:000003">
    <property type="entry name" value="Leucine--tRNA ligase"/>
    <property type="match status" value="1"/>
</dbReference>
<dbReference type="FunFam" id="2.20.28.290:FF:000001">
    <property type="entry name" value="Leucine--tRNA ligase"/>
    <property type="match status" value="1"/>
</dbReference>
<dbReference type="FunFam" id="3.10.20.590:FF:000001">
    <property type="entry name" value="Leucine--tRNA ligase"/>
    <property type="match status" value="1"/>
</dbReference>
<dbReference type="FunFam" id="3.40.50.620:FF:000003">
    <property type="entry name" value="Leucine--tRNA ligase"/>
    <property type="match status" value="1"/>
</dbReference>
<dbReference type="FunFam" id="3.40.50.620:FF:000124">
    <property type="entry name" value="Leucine--tRNA ligase"/>
    <property type="match status" value="1"/>
</dbReference>
<dbReference type="FunFam" id="3.90.740.10:FF:000012">
    <property type="entry name" value="Leucine--tRNA ligase"/>
    <property type="match status" value="1"/>
</dbReference>
<dbReference type="Gene3D" id="2.20.28.290">
    <property type="match status" value="1"/>
</dbReference>
<dbReference type="Gene3D" id="3.10.20.590">
    <property type="match status" value="1"/>
</dbReference>
<dbReference type="Gene3D" id="3.40.50.620">
    <property type="entry name" value="HUPs"/>
    <property type="match status" value="2"/>
</dbReference>
<dbReference type="Gene3D" id="1.10.730.10">
    <property type="entry name" value="Isoleucyl-tRNA Synthetase, Domain 1"/>
    <property type="match status" value="2"/>
</dbReference>
<dbReference type="Gene3D" id="3.90.740.10">
    <property type="entry name" value="Valyl/Leucyl/Isoleucyl-tRNA synthetase, editing domain"/>
    <property type="match status" value="1"/>
</dbReference>
<dbReference type="HAMAP" id="MF_00049_B">
    <property type="entry name" value="Leu_tRNA_synth_B"/>
    <property type="match status" value="1"/>
</dbReference>
<dbReference type="InterPro" id="IPR001412">
    <property type="entry name" value="aa-tRNA-synth_I_CS"/>
</dbReference>
<dbReference type="InterPro" id="IPR002300">
    <property type="entry name" value="aa-tRNA-synth_Ia"/>
</dbReference>
<dbReference type="InterPro" id="IPR002302">
    <property type="entry name" value="Leu-tRNA-ligase"/>
</dbReference>
<dbReference type="InterPro" id="IPR025709">
    <property type="entry name" value="Leu_tRNA-synth_edit"/>
</dbReference>
<dbReference type="InterPro" id="IPR013155">
    <property type="entry name" value="M/V/L/I-tRNA-synth_anticd-bd"/>
</dbReference>
<dbReference type="InterPro" id="IPR015413">
    <property type="entry name" value="Methionyl/Leucyl_tRNA_Synth"/>
</dbReference>
<dbReference type="InterPro" id="IPR014729">
    <property type="entry name" value="Rossmann-like_a/b/a_fold"/>
</dbReference>
<dbReference type="InterPro" id="IPR009080">
    <property type="entry name" value="tRNAsynth_Ia_anticodon-bd"/>
</dbReference>
<dbReference type="InterPro" id="IPR009008">
    <property type="entry name" value="Val/Leu/Ile-tRNA-synth_edit"/>
</dbReference>
<dbReference type="NCBIfam" id="TIGR00396">
    <property type="entry name" value="leuS_bact"/>
    <property type="match status" value="1"/>
</dbReference>
<dbReference type="PANTHER" id="PTHR43740:SF2">
    <property type="entry name" value="LEUCINE--TRNA LIGASE, MITOCHONDRIAL"/>
    <property type="match status" value="1"/>
</dbReference>
<dbReference type="PANTHER" id="PTHR43740">
    <property type="entry name" value="LEUCYL-TRNA SYNTHETASE"/>
    <property type="match status" value="1"/>
</dbReference>
<dbReference type="Pfam" id="PF08264">
    <property type="entry name" value="Anticodon_1"/>
    <property type="match status" value="1"/>
</dbReference>
<dbReference type="Pfam" id="PF00133">
    <property type="entry name" value="tRNA-synt_1"/>
    <property type="match status" value="2"/>
</dbReference>
<dbReference type="Pfam" id="PF13603">
    <property type="entry name" value="tRNA-synt_1_2"/>
    <property type="match status" value="1"/>
</dbReference>
<dbReference type="Pfam" id="PF09334">
    <property type="entry name" value="tRNA-synt_1g"/>
    <property type="match status" value="1"/>
</dbReference>
<dbReference type="PRINTS" id="PR00985">
    <property type="entry name" value="TRNASYNTHLEU"/>
</dbReference>
<dbReference type="SUPFAM" id="SSF47323">
    <property type="entry name" value="Anticodon-binding domain of a subclass of class I aminoacyl-tRNA synthetases"/>
    <property type="match status" value="1"/>
</dbReference>
<dbReference type="SUPFAM" id="SSF52374">
    <property type="entry name" value="Nucleotidylyl transferase"/>
    <property type="match status" value="1"/>
</dbReference>
<dbReference type="SUPFAM" id="SSF50677">
    <property type="entry name" value="ValRS/IleRS/LeuRS editing domain"/>
    <property type="match status" value="1"/>
</dbReference>
<dbReference type="PROSITE" id="PS00178">
    <property type="entry name" value="AA_TRNA_LIGASE_I"/>
    <property type="match status" value="1"/>
</dbReference>